<dbReference type="EC" id="2.4.1.368" evidence="3"/>
<dbReference type="EMBL" id="JQ291615">
    <property type="protein sequence ID" value="AFN26668.1"/>
    <property type="molecule type" value="Genomic_DNA"/>
</dbReference>
<dbReference type="SMR" id="K4GIP0"/>
<dbReference type="GO" id="GO:0035251">
    <property type="term" value="F:UDP-glucosyltransferase activity"/>
    <property type="evidence" value="ECO:0000314"/>
    <property type="project" value="UniProtKB"/>
</dbReference>
<dbReference type="GO" id="GO:0016134">
    <property type="term" value="P:saponin metabolic process"/>
    <property type="evidence" value="ECO:0000314"/>
    <property type="project" value="UniProtKB"/>
</dbReference>
<dbReference type="CDD" id="cd03784">
    <property type="entry name" value="GT1_Gtf-like"/>
    <property type="match status" value="1"/>
</dbReference>
<dbReference type="FunFam" id="3.40.50.2000:FF:000047">
    <property type="entry name" value="Glycosyltransferase"/>
    <property type="match status" value="1"/>
</dbReference>
<dbReference type="FunFam" id="3.40.50.2000:FF:000071">
    <property type="entry name" value="Glycosyltransferase"/>
    <property type="match status" value="1"/>
</dbReference>
<dbReference type="Gene3D" id="3.40.50.2000">
    <property type="entry name" value="Glycogen Phosphorylase B"/>
    <property type="match status" value="2"/>
</dbReference>
<dbReference type="InterPro" id="IPR002213">
    <property type="entry name" value="UDP_glucos_trans"/>
</dbReference>
<dbReference type="InterPro" id="IPR035595">
    <property type="entry name" value="UDP_glycos_trans_CS"/>
</dbReference>
<dbReference type="PANTHER" id="PTHR48047">
    <property type="entry name" value="GLYCOSYLTRANSFERASE"/>
    <property type="match status" value="1"/>
</dbReference>
<dbReference type="PANTHER" id="PTHR48047:SF153">
    <property type="entry name" value="UDP-GLYCOSYLTRANSFERASE 73C5-RELATED"/>
    <property type="match status" value="1"/>
</dbReference>
<dbReference type="Pfam" id="PF00201">
    <property type="entry name" value="UDPGT"/>
    <property type="match status" value="1"/>
</dbReference>
<dbReference type="SUPFAM" id="SSF53756">
    <property type="entry name" value="UDP-Glycosyltransferase/glycogen phosphorylase"/>
    <property type="match status" value="1"/>
</dbReference>
<dbReference type="PROSITE" id="PS00375">
    <property type="entry name" value="UDPGT"/>
    <property type="match status" value="1"/>
</dbReference>
<gene>
    <name evidence="4" type="primary">UGT73C12</name>
</gene>
<organism>
    <name type="scientific">Barbarea vulgaris</name>
    <name type="common">Yellow rocket</name>
    <name type="synonym">Erysimum barbarea</name>
    <dbReference type="NCBI Taxonomy" id="50459"/>
    <lineage>
        <taxon>Eukaryota</taxon>
        <taxon>Viridiplantae</taxon>
        <taxon>Streptophyta</taxon>
        <taxon>Embryophyta</taxon>
        <taxon>Tracheophyta</taxon>
        <taxon>Spermatophyta</taxon>
        <taxon>Magnoliopsida</taxon>
        <taxon>eudicotyledons</taxon>
        <taxon>Gunneridae</taxon>
        <taxon>Pentapetalae</taxon>
        <taxon>rosids</taxon>
        <taxon>malvids</taxon>
        <taxon>Brassicales</taxon>
        <taxon>Brassicaceae</taxon>
        <taxon>Cardamineae</taxon>
        <taxon>Barbarea</taxon>
    </lineage>
</organism>
<keyword id="KW-0328">Glycosyltransferase</keyword>
<keyword id="KW-0808">Transferase</keyword>
<accession>K4GIP0</accession>
<sequence>MVSEITHKSYPLHFVLFPFMAQGHMIPMVDIARLLAQRGVKITIVTTPHNAARFKNVLSRAIESGLPISIVQVKLPSQEAGLPEGNETLDSLVSMELMIHFLKAVNMLEEPVQKLFEEMSPQPSCIISDFCLPYTSKIAKKFNIPKILFHGMCCFCLLCMHILRKNREIVENLKSDKEHFVVPYFPDRVEFTRPQVPVATYVPGDWHEITEDMVEADKTSYGVIVNTYQELEPAYANDYKEARSGKAWTIGPVSLCNKVGADKAERGNKADIDQDECLKWLNSKEEGSVLYVCLGSICNLPLSQLKELGLGLEESQRPFIWVIRGWEKNKELHEWFSESGFEERIKDRGLLIKGWAPQMLILSHHSVGGFLTHCGWNSTLEGLTAGLPLLTWPLFADQFCNEKLAVQVLKAGVSAGVDQPMKWGEEEKIGVLVDKEGVKKAVEELMGESDDAKEIRRRAKELGELAHKAVEEGGSSHSNITSLLEDIMQLAQSNN</sequence>
<proteinExistence type="evidence at protein level"/>
<feature type="chain" id="PRO_0000452130" description="UDP-glycosyltransferase 73C12">
    <location>
        <begin position="1"/>
        <end position="495"/>
    </location>
</feature>
<feature type="active site" description="Proton acceptor" evidence="1">
    <location>
        <position position="24"/>
    </location>
</feature>
<feature type="active site" description="Charge relay" evidence="1">
    <location>
        <position position="129"/>
    </location>
</feature>
<feature type="binding site" evidence="2">
    <location>
        <position position="24"/>
    </location>
    <ligand>
        <name>an anthocyanidin</name>
        <dbReference type="ChEBI" id="CHEBI:143576"/>
    </ligand>
</feature>
<feature type="binding site" evidence="1">
    <location>
        <position position="356"/>
    </location>
    <ligand>
        <name>UDP-alpha-D-glucose</name>
        <dbReference type="ChEBI" id="CHEBI:58885"/>
    </ligand>
</feature>
<feature type="binding site" evidence="1">
    <location>
        <position position="358"/>
    </location>
    <ligand>
        <name>UDP-alpha-D-glucose</name>
        <dbReference type="ChEBI" id="CHEBI:58885"/>
    </ligand>
</feature>
<feature type="binding site" evidence="1">
    <location>
        <position position="373"/>
    </location>
    <ligand>
        <name>UDP-alpha-D-glucose</name>
        <dbReference type="ChEBI" id="CHEBI:58885"/>
    </ligand>
</feature>
<feature type="binding site" evidence="1">
    <location>
        <position position="376"/>
    </location>
    <ligand>
        <name>UDP-alpha-D-glucose</name>
        <dbReference type="ChEBI" id="CHEBI:58885"/>
    </ligand>
</feature>
<feature type="binding site" evidence="1">
    <location>
        <position position="377"/>
    </location>
    <ligand>
        <name>UDP-alpha-D-glucose</name>
        <dbReference type="ChEBI" id="CHEBI:58885"/>
    </ligand>
</feature>
<feature type="binding site" evidence="1">
    <location>
        <position position="378"/>
    </location>
    <ligand>
        <name>UDP-alpha-D-glucose</name>
        <dbReference type="ChEBI" id="CHEBI:58885"/>
    </ligand>
</feature>
<feature type="binding site" evidence="1">
    <location>
        <position position="381"/>
    </location>
    <ligand>
        <name>UDP-alpha-D-glucose</name>
        <dbReference type="ChEBI" id="CHEBI:58885"/>
    </ligand>
</feature>
<feature type="binding site" evidence="2">
    <location>
        <position position="396"/>
    </location>
    <ligand>
        <name>an anthocyanidin</name>
        <dbReference type="ChEBI" id="CHEBI:143576"/>
    </ligand>
</feature>
<feature type="binding site" evidence="1">
    <location>
        <position position="397"/>
    </location>
    <ligand>
        <name>UDP-alpha-D-glucose</name>
        <dbReference type="ChEBI" id="CHEBI:58885"/>
    </ligand>
</feature>
<feature type="binding site" evidence="1">
    <location>
        <position position="398"/>
    </location>
    <ligand>
        <name>UDP-alpha-D-glucose</name>
        <dbReference type="ChEBI" id="CHEBI:58885"/>
    </ligand>
</feature>
<reference key="1">
    <citation type="journal article" date="2012" name="Plant Physiol.">
        <title>UDP-glycosyltransferases from the UGT73C subfamily in Barbarea vulgaris catalyze sapogenin 3-O-glucosylation in saponin-mediated insect resistance.</title>
        <authorList>
            <person name="Augustin J.M."/>
            <person name="Drok S."/>
            <person name="Shinoda T."/>
            <person name="Sanmiya K."/>
            <person name="Nielsen J.K."/>
            <person name="Khakimov B."/>
            <person name="Olsen C.E."/>
            <person name="Hansen E.H."/>
            <person name="Kuzina V."/>
            <person name="Ekstrom C.T."/>
            <person name="Hauser T."/>
            <person name="Bak S."/>
        </authorList>
    </citation>
    <scope>NUCLEOTIDE SEQUENCE [GENOMIC DNA]</scope>
    <scope>FUNCTION</scope>
    <scope>CATALYTIC ACTIVITY</scope>
    <scope>BIOPHYSICOCHEMICAL PROPERTIES</scope>
</reference>
<comment type="function">
    <text evidence="3">Catalyzes the transfer of a glucose (Glc) moiety from UDP-Glc to the C-3 position of the oleanane sapogenins oleanolate and hederagenin, and to the C-28 carboxylic group of the lupane sapogenin betulinate (PubMed:23027665). The monoglucosylated hederagenin 3-O-beta-D-glucoside is a feeding deterrent of the yellow-striped flea beetle (Phyllotreta nemorum) (PubMed:23027665).</text>
</comment>
<comment type="catalytic activity">
    <reaction evidence="3">
        <text>oleanolate + UDP-alpha-D-glucose = oleanolate 3-O-beta-D-glucoside + UDP + H(+)</text>
        <dbReference type="Rhea" id="RHEA:58024"/>
        <dbReference type="ChEBI" id="CHEBI:15378"/>
        <dbReference type="ChEBI" id="CHEBI:58223"/>
        <dbReference type="ChEBI" id="CHEBI:58885"/>
        <dbReference type="ChEBI" id="CHEBI:82828"/>
        <dbReference type="ChEBI" id="CHEBI:142488"/>
        <dbReference type="EC" id="2.4.1.368"/>
    </reaction>
    <physiologicalReaction direction="left-to-right" evidence="3">
        <dbReference type="Rhea" id="RHEA:58025"/>
    </physiologicalReaction>
</comment>
<comment type="biophysicochemical properties">
    <kinetics>
        <KM evidence="3">24 uM for UDP-glucose</KM>
    </kinetics>
</comment>
<comment type="similarity">
    <text evidence="5">Belongs to the UDP-glycosyltransferase family.</text>
</comment>
<name>73C12_BARVU</name>
<evidence type="ECO:0000250" key="1">
    <source>
        <dbReference type="UniProtKB" id="A0A0A1HA03"/>
    </source>
</evidence>
<evidence type="ECO:0000250" key="2">
    <source>
        <dbReference type="UniProtKB" id="P51094"/>
    </source>
</evidence>
<evidence type="ECO:0000269" key="3">
    <source>
    </source>
</evidence>
<evidence type="ECO:0000303" key="4">
    <source>
    </source>
</evidence>
<evidence type="ECO:0000305" key="5"/>
<protein>
    <recommendedName>
        <fullName evidence="4">UDP-glycosyltransferase 73C12</fullName>
        <ecNumber evidence="3">2.4.1.368</ecNumber>
    </recommendedName>
    <alternativeName>
        <fullName evidence="5">Oleanolate 3-O-glucosyltransferase UGT73C12</fullName>
    </alternativeName>
</protein>